<gene>
    <name evidence="1" type="primary">mutL</name>
    <name type="ordered locus">BMEA_B0218</name>
</gene>
<accession>C0RKF6</accession>
<comment type="function">
    <text evidence="1">This protein is involved in the repair of mismatches in DNA. It is required for dam-dependent methyl-directed DNA mismatch repair. May act as a 'molecular matchmaker', a protein that promotes the formation of a stable complex between two or more DNA-binding proteins in an ATP-dependent manner without itself being part of a final effector complex.</text>
</comment>
<comment type="similarity">
    <text evidence="1">Belongs to the DNA mismatch repair MutL/HexB family.</text>
</comment>
<organism>
    <name type="scientific">Brucella melitensis biotype 2 (strain ATCC 23457)</name>
    <dbReference type="NCBI Taxonomy" id="546272"/>
    <lineage>
        <taxon>Bacteria</taxon>
        <taxon>Pseudomonadati</taxon>
        <taxon>Pseudomonadota</taxon>
        <taxon>Alphaproteobacteria</taxon>
        <taxon>Hyphomicrobiales</taxon>
        <taxon>Brucellaceae</taxon>
        <taxon>Brucella/Ochrobactrum group</taxon>
        <taxon>Brucella</taxon>
    </lineage>
</organism>
<sequence length="623" mass="66794">MTIRHLSETIINQIAAGEVIERPASVIKELVENAIDAGATRIEVVTAGGGKTLLRVTDNGSGIPADELALAVSRHCTSKLTDDVHDIRALGFRGEALPSIGSVSKLTLKSRPQDADSGFEVCVTGGHLDGPRPTALNRGTIVEVRDLFYATPARLKFMKTDRAEATAITDVVKRIGIAFPHIRFSLAGTDRTPFEMPATGTGAEATLERIGQVLGREFGENALAIDAERDGVRLAGFVGIPSFNRGNALHQFAYVNGRPVRDKQIFGALRGAYSDVIARDRHPVAVLFLTLDPALVDVNVHPAKADVRFRDPGLVRGLIVGAIKQALAQSGIRPATSGAEAMLQAFRAEGFGAQQSAPRPANSYSPASWRTAPPAPRSEWSPQTAQTAHRPLDLQAAPALRENGQAVLGDVAVPASDARASVAEAPVELMQKPLGAARAQIHENYIVAQTEDSLVIVDQHAAHERLVYEALKNALHARPIAGQMLLIPEIVDLPEEDAQRLAGHAETLARFGLGVEQFGPGAIAVRETPAMLGEMNVQQLIRDLADEIAEHDTADGLKAMLHHVAATMACHGSVRSGRRLKPEEMNALLRDMEATPGSGTCNHGRPTYIELKLTDIERLFGRR</sequence>
<keyword id="KW-0227">DNA damage</keyword>
<keyword id="KW-0234">DNA repair</keyword>
<feature type="chain" id="PRO_1000192163" description="DNA mismatch repair protein MutL">
    <location>
        <begin position="1"/>
        <end position="623"/>
    </location>
</feature>
<feature type="region of interest" description="Disordered" evidence="2">
    <location>
        <begin position="353"/>
        <end position="389"/>
    </location>
</feature>
<feature type="compositionally biased region" description="Polar residues" evidence="2">
    <location>
        <begin position="353"/>
        <end position="368"/>
    </location>
</feature>
<proteinExistence type="inferred from homology"/>
<reference key="1">
    <citation type="submission" date="2009-03" db="EMBL/GenBank/DDBJ databases">
        <title>Brucella melitensis ATCC 23457 whole genome shotgun sequencing project.</title>
        <authorList>
            <person name="Setubal J.C."/>
            <person name="Boyle S."/>
            <person name="Crasta O.R."/>
            <person name="Gillespie J.J."/>
            <person name="Kenyon R.W."/>
            <person name="Lu J."/>
            <person name="Mane S."/>
            <person name="Nagrani S."/>
            <person name="Shallom J.M."/>
            <person name="Shallom S."/>
            <person name="Shukla M."/>
            <person name="Snyder E.E."/>
            <person name="Sobral B.W."/>
            <person name="Wattam A.R."/>
            <person name="Will R."/>
            <person name="Williams K."/>
            <person name="Yoo H."/>
            <person name="Munk C."/>
            <person name="Tapia R."/>
            <person name="Han C."/>
            <person name="Detter J.C."/>
            <person name="Bruce D."/>
            <person name="Brettin T.S."/>
        </authorList>
    </citation>
    <scope>NUCLEOTIDE SEQUENCE [LARGE SCALE GENOMIC DNA]</scope>
    <source>
        <strain>ATCC 23457</strain>
    </source>
</reference>
<name>MUTL_BRUMB</name>
<evidence type="ECO:0000255" key="1">
    <source>
        <dbReference type="HAMAP-Rule" id="MF_00149"/>
    </source>
</evidence>
<evidence type="ECO:0000256" key="2">
    <source>
        <dbReference type="SAM" id="MobiDB-lite"/>
    </source>
</evidence>
<protein>
    <recommendedName>
        <fullName evidence="1">DNA mismatch repair protein MutL</fullName>
    </recommendedName>
</protein>
<dbReference type="EMBL" id="CP001489">
    <property type="protein sequence ID" value="ACO02089.1"/>
    <property type="molecule type" value="Genomic_DNA"/>
</dbReference>
<dbReference type="RefSeq" id="WP_004686161.1">
    <property type="nucleotide sequence ID" value="NC_012442.1"/>
</dbReference>
<dbReference type="SMR" id="C0RKF6"/>
<dbReference type="KEGG" id="bmi:BMEA_B0218"/>
<dbReference type="HOGENOM" id="CLU_004131_4_2_5"/>
<dbReference type="Proteomes" id="UP000001748">
    <property type="component" value="Chromosome II"/>
</dbReference>
<dbReference type="GO" id="GO:0032300">
    <property type="term" value="C:mismatch repair complex"/>
    <property type="evidence" value="ECO:0007669"/>
    <property type="project" value="InterPro"/>
</dbReference>
<dbReference type="GO" id="GO:0005524">
    <property type="term" value="F:ATP binding"/>
    <property type="evidence" value="ECO:0007669"/>
    <property type="project" value="InterPro"/>
</dbReference>
<dbReference type="GO" id="GO:0016887">
    <property type="term" value="F:ATP hydrolysis activity"/>
    <property type="evidence" value="ECO:0007669"/>
    <property type="project" value="InterPro"/>
</dbReference>
<dbReference type="GO" id="GO:0140664">
    <property type="term" value="F:ATP-dependent DNA damage sensor activity"/>
    <property type="evidence" value="ECO:0007669"/>
    <property type="project" value="InterPro"/>
</dbReference>
<dbReference type="GO" id="GO:0030983">
    <property type="term" value="F:mismatched DNA binding"/>
    <property type="evidence" value="ECO:0007669"/>
    <property type="project" value="InterPro"/>
</dbReference>
<dbReference type="GO" id="GO:0006298">
    <property type="term" value="P:mismatch repair"/>
    <property type="evidence" value="ECO:0007669"/>
    <property type="project" value="UniProtKB-UniRule"/>
</dbReference>
<dbReference type="CDD" id="cd16926">
    <property type="entry name" value="HATPase_MutL-MLH-PMS-like"/>
    <property type="match status" value="1"/>
</dbReference>
<dbReference type="CDD" id="cd00782">
    <property type="entry name" value="MutL_Trans"/>
    <property type="match status" value="1"/>
</dbReference>
<dbReference type="FunFam" id="3.30.565.10:FF:000003">
    <property type="entry name" value="DNA mismatch repair endonuclease MutL"/>
    <property type="match status" value="1"/>
</dbReference>
<dbReference type="Gene3D" id="3.30.230.10">
    <property type="match status" value="1"/>
</dbReference>
<dbReference type="Gene3D" id="3.30.565.10">
    <property type="entry name" value="Histidine kinase-like ATPase, C-terminal domain"/>
    <property type="match status" value="1"/>
</dbReference>
<dbReference type="Gene3D" id="3.30.1540.20">
    <property type="entry name" value="MutL, C-terminal domain, dimerisation subdomain"/>
    <property type="match status" value="1"/>
</dbReference>
<dbReference type="Gene3D" id="3.30.1370.100">
    <property type="entry name" value="MutL, C-terminal domain, regulatory subdomain"/>
    <property type="match status" value="1"/>
</dbReference>
<dbReference type="HAMAP" id="MF_00149">
    <property type="entry name" value="DNA_mis_repair"/>
    <property type="match status" value="1"/>
</dbReference>
<dbReference type="InterPro" id="IPR014762">
    <property type="entry name" value="DNA_mismatch_repair_CS"/>
</dbReference>
<dbReference type="InterPro" id="IPR020667">
    <property type="entry name" value="DNA_mismatch_repair_MutL"/>
</dbReference>
<dbReference type="InterPro" id="IPR013507">
    <property type="entry name" value="DNA_mismatch_S5_2-like"/>
</dbReference>
<dbReference type="InterPro" id="IPR036890">
    <property type="entry name" value="HATPase_C_sf"/>
</dbReference>
<dbReference type="InterPro" id="IPR002099">
    <property type="entry name" value="MutL/Mlh/PMS"/>
</dbReference>
<dbReference type="InterPro" id="IPR038973">
    <property type="entry name" value="MutL/Mlh/Pms-like"/>
</dbReference>
<dbReference type="InterPro" id="IPR014790">
    <property type="entry name" value="MutL_C"/>
</dbReference>
<dbReference type="InterPro" id="IPR042120">
    <property type="entry name" value="MutL_C_dimsub"/>
</dbReference>
<dbReference type="InterPro" id="IPR042121">
    <property type="entry name" value="MutL_C_regsub"/>
</dbReference>
<dbReference type="InterPro" id="IPR037198">
    <property type="entry name" value="MutL_C_sf"/>
</dbReference>
<dbReference type="InterPro" id="IPR020568">
    <property type="entry name" value="Ribosomal_Su5_D2-typ_SF"/>
</dbReference>
<dbReference type="InterPro" id="IPR014721">
    <property type="entry name" value="Ribsml_uS5_D2-typ_fold_subgr"/>
</dbReference>
<dbReference type="NCBIfam" id="TIGR00585">
    <property type="entry name" value="mutl"/>
    <property type="match status" value="1"/>
</dbReference>
<dbReference type="NCBIfam" id="NF000953">
    <property type="entry name" value="PRK00095.2-4"/>
    <property type="match status" value="1"/>
</dbReference>
<dbReference type="PANTHER" id="PTHR10073">
    <property type="entry name" value="DNA MISMATCH REPAIR PROTEIN MLH, PMS, MUTL"/>
    <property type="match status" value="1"/>
</dbReference>
<dbReference type="PANTHER" id="PTHR10073:SF12">
    <property type="entry name" value="DNA MISMATCH REPAIR PROTEIN MLH1"/>
    <property type="match status" value="1"/>
</dbReference>
<dbReference type="Pfam" id="PF01119">
    <property type="entry name" value="DNA_mis_repair"/>
    <property type="match status" value="1"/>
</dbReference>
<dbReference type="Pfam" id="PF13589">
    <property type="entry name" value="HATPase_c_3"/>
    <property type="match status" value="1"/>
</dbReference>
<dbReference type="Pfam" id="PF08676">
    <property type="entry name" value="MutL_C"/>
    <property type="match status" value="1"/>
</dbReference>
<dbReference type="SMART" id="SM01340">
    <property type="entry name" value="DNA_mis_repair"/>
    <property type="match status" value="1"/>
</dbReference>
<dbReference type="SMART" id="SM00853">
    <property type="entry name" value="MutL_C"/>
    <property type="match status" value="1"/>
</dbReference>
<dbReference type="SUPFAM" id="SSF55874">
    <property type="entry name" value="ATPase domain of HSP90 chaperone/DNA topoisomerase II/histidine kinase"/>
    <property type="match status" value="1"/>
</dbReference>
<dbReference type="SUPFAM" id="SSF118116">
    <property type="entry name" value="DNA mismatch repair protein MutL"/>
    <property type="match status" value="1"/>
</dbReference>
<dbReference type="SUPFAM" id="SSF54211">
    <property type="entry name" value="Ribosomal protein S5 domain 2-like"/>
    <property type="match status" value="1"/>
</dbReference>
<dbReference type="PROSITE" id="PS00058">
    <property type="entry name" value="DNA_MISMATCH_REPAIR_1"/>
    <property type="match status" value="1"/>
</dbReference>